<organism>
    <name type="scientific">Listeria monocytogenes serotype 4a (strain HCC23)</name>
    <dbReference type="NCBI Taxonomy" id="552536"/>
    <lineage>
        <taxon>Bacteria</taxon>
        <taxon>Bacillati</taxon>
        <taxon>Bacillota</taxon>
        <taxon>Bacilli</taxon>
        <taxon>Bacillales</taxon>
        <taxon>Listeriaceae</taxon>
        <taxon>Listeria</taxon>
    </lineage>
</organism>
<accession>B8DBH0</accession>
<gene>
    <name evidence="1" type="primary">glyA</name>
    <name type="ordered locus">LMHCC_0058</name>
</gene>
<comment type="function">
    <text evidence="1">Catalyzes the reversible interconversion of serine and glycine with tetrahydrofolate (THF) serving as the one-carbon carrier. This reaction serves as the major source of one-carbon groups required for the biosynthesis of purines, thymidylate, methionine, and other important biomolecules. Also exhibits THF-independent aldolase activity toward beta-hydroxyamino acids, producing glycine and aldehydes, via a retro-aldol mechanism.</text>
</comment>
<comment type="catalytic activity">
    <reaction evidence="1">
        <text>(6R)-5,10-methylene-5,6,7,8-tetrahydrofolate + glycine + H2O = (6S)-5,6,7,8-tetrahydrofolate + L-serine</text>
        <dbReference type="Rhea" id="RHEA:15481"/>
        <dbReference type="ChEBI" id="CHEBI:15377"/>
        <dbReference type="ChEBI" id="CHEBI:15636"/>
        <dbReference type="ChEBI" id="CHEBI:33384"/>
        <dbReference type="ChEBI" id="CHEBI:57305"/>
        <dbReference type="ChEBI" id="CHEBI:57453"/>
        <dbReference type="EC" id="2.1.2.1"/>
    </reaction>
</comment>
<comment type="cofactor">
    <cofactor evidence="1">
        <name>pyridoxal 5'-phosphate</name>
        <dbReference type="ChEBI" id="CHEBI:597326"/>
    </cofactor>
</comment>
<comment type="pathway">
    <text evidence="1">One-carbon metabolism; tetrahydrofolate interconversion.</text>
</comment>
<comment type="pathway">
    <text evidence="1">Amino-acid biosynthesis; glycine biosynthesis; glycine from L-serine: step 1/1.</text>
</comment>
<comment type="subunit">
    <text evidence="1">Homodimer.</text>
</comment>
<comment type="subcellular location">
    <subcellularLocation>
        <location evidence="1">Cytoplasm</location>
    </subcellularLocation>
</comment>
<comment type="similarity">
    <text evidence="1">Belongs to the SHMT family.</text>
</comment>
<dbReference type="EC" id="2.1.2.1" evidence="1"/>
<dbReference type="EMBL" id="CP001175">
    <property type="protein sequence ID" value="ACK38421.1"/>
    <property type="molecule type" value="Genomic_DNA"/>
</dbReference>
<dbReference type="RefSeq" id="WP_003726682.1">
    <property type="nucleotide sequence ID" value="NC_011660.1"/>
</dbReference>
<dbReference type="SMR" id="B8DBH0"/>
<dbReference type="KEGG" id="lmh:LMHCC_0058"/>
<dbReference type="HOGENOM" id="CLU_022477_2_1_9"/>
<dbReference type="UniPathway" id="UPA00193"/>
<dbReference type="UniPathway" id="UPA00288">
    <property type="reaction ID" value="UER01023"/>
</dbReference>
<dbReference type="GO" id="GO:0005829">
    <property type="term" value="C:cytosol"/>
    <property type="evidence" value="ECO:0007669"/>
    <property type="project" value="TreeGrafter"/>
</dbReference>
<dbReference type="GO" id="GO:0004372">
    <property type="term" value="F:glycine hydroxymethyltransferase activity"/>
    <property type="evidence" value="ECO:0007669"/>
    <property type="project" value="UniProtKB-UniRule"/>
</dbReference>
<dbReference type="GO" id="GO:0030170">
    <property type="term" value="F:pyridoxal phosphate binding"/>
    <property type="evidence" value="ECO:0007669"/>
    <property type="project" value="UniProtKB-UniRule"/>
</dbReference>
<dbReference type="GO" id="GO:0019264">
    <property type="term" value="P:glycine biosynthetic process from serine"/>
    <property type="evidence" value="ECO:0007669"/>
    <property type="project" value="UniProtKB-UniRule"/>
</dbReference>
<dbReference type="GO" id="GO:0035999">
    <property type="term" value="P:tetrahydrofolate interconversion"/>
    <property type="evidence" value="ECO:0007669"/>
    <property type="project" value="UniProtKB-UniRule"/>
</dbReference>
<dbReference type="CDD" id="cd00378">
    <property type="entry name" value="SHMT"/>
    <property type="match status" value="1"/>
</dbReference>
<dbReference type="FunFam" id="3.40.640.10:FF:000001">
    <property type="entry name" value="Serine hydroxymethyltransferase"/>
    <property type="match status" value="1"/>
</dbReference>
<dbReference type="Gene3D" id="3.90.1150.10">
    <property type="entry name" value="Aspartate Aminotransferase, domain 1"/>
    <property type="match status" value="1"/>
</dbReference>
<dbReference type="Gene3D" id="3.40.640.10">
    <property type="entry name" value="Type I PLP-dependent aspartate aminotransferase-like (Major domain)"/>
    <property type="match status" value="1"/>
</dbReference>
<dbReference type="HAMAP" id="MF_00051">
    <property type="entry name" value="SHMT"/>
    <property type="match status" value="1"/>
</dbReference>
<dbReference type="InterPro" id="IPR015424">
    <property type="entry name" value="PyrdxlP-dep_Trfase"/>
</dbReference>
<dbReference type="InterPro" id="IPR015421">
    <property type="entry name" value="PyrdxlP-dep_Trfase_major"/>
</dbReference>
<dbReference type="InterPro" id="IPR015422">
    <property type="entry name" value="PyrdxlP-dep_Trfase_small"/>
</dbReference>
<dbReference type="InterPro" id="IPR001085">
    <property type="entry name" value="Ser_HO-MeTrfase"/>
</dbReference>
<dbReference type="InterPro" id="IPR049943">
    <property type="entry name" value="Ser_HO-MeTrfase-like"/>
</dbReference>
<dbReference type="InterPro" id="IPR019798">
    <property type="entry name" value="Ser_HO-MeTrfase_PLP_BS"/>
</dbReference>
<dbReference type="InterPro" id="IPR039429">
    <property type="entry name" value="SHMT-like_dom"/>
</dbReference>
<dbReference type="NCBIfam" id="NF000586">
    <property type="entry name" value="PRK00011.1"/>
    <property type="match status" value="1"/>
</dbReference>
<dbReference type="PANTHER" id="PTHR11680">
    <property type="entry name" value="SERINE HYDROXYMETHYLTRANSFERASE"/>
    <property type="match status" value="1"/>
</dbReference>
<dbReference type="PANTHER" id="PTHR11680:SF35">
    <property type="entry name" value="SERINE HYDROXYMETHYLTRANSFERASE 1"/>
    <property type="match status" value="1"/>
</dbReference>
<dbReference type="Pfam" id="PF00464">
    <property type="entry name" value="SHMT"/>
    <property type="match status" value="1"/>
</dbReference>
<dbReference type="PIRSF" id="PIRSF000412">
    <property type="entry name" value="SHMT"/>
    <property type="match status" value="1"/>
</dbReference>
<dbReference type="SUPFAM" id="SSF53383">
    <property type="entry name" value="PLP-dependent transferases"/>
    <property type="match status" value="1"/>
</dbReference>
<dbReference type="PROSITE" id="PS00096">
    <property type="entry name" value="SHMT"/>
    <property type="match status" value="1"/>
</dbReference>
<proteinExistence type="inferred from homology"/>
<keyword id="KW-0028">Amino-acid biosynthesis</keyword>
<keyword id="KW-0963">Cytoplasm</keyword>
<keyword id="KW-0554">One-carbon metabolism</keyword>
<keyword id="KW-0663">Pyridoxal phosphate</keyword>
<keyword id="KW-0808">Transferase</keyword>
<feature type="chain" id="PRO_1000117641" description="Serine hydroxymethyltransferase">
    <location>
        <begin position="1"/>
        <end position="413"/>
    </location>
</feature>
<feature type="binding site" evidence="1">
    <location>
        <position position="117"/>
    </location>
    <ligand>
        <name>(6S)-5,6,7,8-tetrahydrofolate</name>
        <dbReference type="ChEBI" id="CHEBI:57453"/>
    </ligand>
</feature>
<feature type="binding site" evidence="1">
    <location>
        <begin position="121"/>
        <end position="123"/>
    </location>
    <ligand>
        <name>(6S)-5,6,7,8-tetrahydrofolate</name>
        <dbReference type="ChEBI" id="CHEBI:57453"/>
    </ligand>
</feature>
<feature type="binding site" evidence="1">
    <location>
        <begin position="349"/>
        <end position="351"/>
    </location>
    <ligand>
        <name>(6S)-5,6,7,8-tetrahydrofolate</name>
        <dbReference type="ChEBI" id="CHEBI:57453"/>
    </ligand>
</feature>
<feature type="site" description="Plays an important role in substrate specificity" evidence="1">
    <location>
        <position position="225"/>
    </location>
</feature>
<feature type="modified residue" description="N6-(pyridoxal phosphate)lysine" evidence="1">
    <location>
        <position position="226"/>
    </location>
</feature>
<name>GLYA_LISMH</name>
<protein>
    <recommendedName>
        <fullName evidence="1">Serine hydroxymethyltransferase</fullName>
        <shortName evidence="1">SHMT</shortName>
        <shortName evidence="1">Serine methylase</shortName>
        <ecNumber evidence="1">2.1.2.1</ecNumber>
    </recommendedName>
</protein>
<sequence length="413" mass="45093">MVYLQKQDKEVFDAIKLELGRQRANIELIASENFVSEQVMEAMGSVLTNKYAEGYPGKRYYGGCEFVDIVEDLARDRAKKLFGAEYANVQPHSGAQANMAVYHTVLEPGDTVLGMNLSHGGHLTHGSPVNFSGVLYNFVEYGVREDTKEIDYDIVREAALKHKPKMIVAGASAYPRKIDFAKFREIADEVGAYLMVDMAHIAGLVAAGLHQNPVPYADFTTTTTHKTLRGPRGGMILAKAEWEQKLNKSIFPGIQGGPLMHVIAAKAVAFGEALQPEFTAYCEQIIRNSKKLAETLQANDVAVLTGGSDNHLLLIDLKPLGLTGKAAEKVLDEVGITVNKNTIPFETESPFVTSGIRVGVAAVTTRGFDEVAIEKVGVLISEVLHNLENEEVLADVKARVATLTNEYPLYPSL</sequence>
<reference key="1">
    <citation type="journal article" date="2011" name="J. Bacteriol.">
        <title>Genome sequence of lineage III Listeria monocytogenes strain HCC23.</title>
        <authorList>
            <person name="Steele C.L."/>
            <person name="Donaldson J.R."/>
            <person name="Paul D."/>
            <person name="Banes M.M."/>
            <person name="Arick T."/>
            <person name="Bridges S.M."/>
            <person name="Lawrence M.L."/>
        </authorList>
    </citation>
    <scope>NUCLEOTIDE SEQUENCE [LARGE SCALE GENOMIC DNA]</scope>
    <source>
        <strain>HCC23</strain>
    </source>
</reference>
<evidence type="ECO:0000255" key="1">
    <source>
        <dbReference type="HAMAP-Rule" id="MF_00051"/>
    </source>
</evidence>